<accession>Q6FT03</accession>
<organism>
    <name type="scientific">Candida glabrata (strain ATCC 2001 / BCRC 20586 / JCM 3761 / NBRC 0622 / NRRL Y-65 / CBS 138)</name>
    <name type="common">Yeast</name>
    <name type="synonym">Nakaseomyces glabratus</name>
    <dbReference type="NCBI Taxonomy" id="284593"/>
    <lineage>
        <taxon>Eukaryota</taxon>
        <taxon>Fungi</taxon>
        <taxon>Dikarya</taxon>
        <taxon>Ascomycota</taxon>
        <taxon>Saccharomycotina</taxon>
        <taxon>Saccharomycetes</taxon>
        <taxon>Saccharomycetales</taxon>
        <taxon>Saccharomycetaceae</taxon>
        <taxon>Nakaseomyces</taxon>
    </lineage>
</organism>
<sequence length="164" mass="19339">MSGKREFKSFGSTEETMFSQHHKIPSTSEMYAEPENFLEIEVRNPKTHVPNGVDQRGMYTDYEIICRTNLPNFHKRASRVRRRYSDFEFFRKCLLKEISMLNNPRVVVPHLPGKIYLSNRFSDEVIEERRQGLNRWMQIVAGHPLLQSGSKTLIRFIEDDKFVG</sequence>
<proteinExistence type="inferred from homology"/>
<reference key="1">
    <citation type="journal article" date="2004" name="Nature">
        <title>Genome evolution in yeasts.</title>
        <authorList>
            <person name="Dujon B."/>
            <person name="Sherman D."/>
            <person name="Fischer G."/>
            <person name="Durrens P."/>
            <person name="Casaregola S."/>
            <person name="Lafontaine I."/>
            <person name="de Montigny J."/>
            <person name="Marck C."/>
            <person name="Neuveglise C."/>
            <person name="Talla E."/>
            <person name="Goffard N."/>
            <person name="Frangeul L."/>
            <person name="Aigle M."/>
            <person name="Anthouard V."/>
            <person name="Babour A."/>
            <person name="Barbe V."/>
            <person name="Barnay S."/>
            <person name="Blanchin S."/>
            <person name="Beckerich J.-M."/>
            <person name="Beyne E."/>
            <person name="Bleykasten C."/>
            <person name="Boisrame A."/>
            <person name="Boyer J."/>
            <person name="Cattolico L."/>
            <person name="Confanioleri F."/>
            <person name="de Daruvar A."/>
            <person name="Despons L."/>
            <person name="Fabre E."/>
            <person name="Fairhead C."/>
            <person name="Ferry-Dumazet H."/>
            <person name="Groppi A."/>
            <person name="Hantraye F."/>
            <person name="Hennequin C."/>
            <person name="Jauniaux N."/>
            <person name="Joyet P."/>
            <person name="Kachouri R."/>
            <person name="Kerrest A."/>
            <person name="Koszul R."/>
            <person name="Lemaire M."/>
            <person name="Lesur I."/>
            <person name="Ma L."/>
            <person name="Muller H."/>
            <person name="Nicaud J.-M."/>
            <person name="Nikolski M."/>
            <person name="Oztas S."/>
            <person name="Ozier-Kalogeropoulos O."/>
            <person name="Pellenz S."/>
            <person name="Potier S."/>
            <person name="Richard G.-F."/>
            <person name="Straub M.-L."/>
            <person name="Suleau A."/>
            <person name="Swennen D."/>
            <person name="Tekaia F."/>
            <person name="Wesolowski-Louvel M."/>
            <person name="Westhof E."/>
            <person name="Wirth B."/>
            <person name="Zeniou-Meyer M."/>
            <person name="Zivanovic Y."/>
            <person name="Bolotin-Fukuhara M."/>
            <person name="Thierry A."/>
            <person name="Bouchier C."/>
            <person name="Caudron B."/>
            <person name="Scarpelli C."/>
            <person name="Gaillardin C."/>
            <person name="Weissenbach J."/>
            <person name="Wincker P."/>
            <person name="Souciet J.-L."/>
        </authorList>
    </citation>
    <scope>NUCLEOTIDE SEQUENCE [LARGE SCALE GENOMIC DNA]</scope>
    <source>
        <strain>ATCC 2001 / BCRC 20586 / JCM 3761 / NBRC 0622 / NRRL Y-65 / CBS 138</strain>
    </source>
</reference>
<feature type="chain" id="PRO_0000238585" description="Sorting nexin-3">
    <location>
        <begin position="1"/>
        <end position="164"/>
    </location>
</feature>
<feature type="domain" description="PX" evidence="2">
    <location>
        <begin position="40"/>
        <end position="163"/>
    </location>
</feature>
<feature type="region of interest" description="Disordered" evidence="3">
    <location>
        <begin position="1"/>
        <end position="26"/>
    </location>
</feature>
<feature type="compositionally biased region" description="Polar residues" evidence="3">
    <location>
        <begin position="10"/>
        <end position="26"/>
    </location>
</feature>
<feature type="binding site" evidence="1">
    <location>
        <position position="83"/>
    </location>
    <ligand>
        <name>a 1,2-diacyl-sn-glycero-3-phospho-(1D-myo-inositol-3-phosphate)</name>
        <dbReference type="ChEBI" id="CHEBI:58088"/>
    </ligand>
</feature>
<feature type="binding site" evidence="1">
    <location>
        <position position="85"/>
    </location>
    <ligand>
        <name>a 1,2-diacyl-sn-glycero-3-phospho-(1D-myo-inositol-3-phosphate)</name>
        <dbReference type="ChEBI" id="CHEBI:58088"/>
    </ligand>
</feature>
<feature type="binding site" evidence="1">
    <location>
        <position position="114"/>
    </location>
    <ligand>
        <name>a 1,2-diacyl-sn-glycero-3-phospho-(1D-myo-inositol-3-phosphate)</name>
        <dbReference type="ChEBI" id="CHEBI:58088"/>
    </ligand>
</feature>
<feature type="binding site" evidence="1">
    <location>
        <position position="120"/>
    </location>
    <ligand>
        <name>a 1,2-diacyl-sn-glycero-3-phospho-(1D-myo-inositol-3-phosphate)</name>
        <dbReference type="ChEBI" id="CHEBI:58088"/>
    </ligand>
</feature>
<feature type="binding site" evidence="1">
    <location>
        <position position="129"/>
    </location>
    <ligand>
        <name>a 1,2-diacyl-sn-glycero-3-phospho-(1D-myo-inositol-3-phosphate)</name>
        <dbReference type="ChEBI" id="CHEBI:58088"/>
    </ligand>
</feature>
<dbReference type="EMBL" id="CR380953">
    <property type="protein sequence ID" value="CAG59568.1"/>
    <property type="molecule type" value="Genomic_DNA"/>
</dbReference>
<dbReference type="RefSeq" id="XP_446641.1">
    <property type="nucleotide sequence ID" value="XM_446641.1"/>
</dbReference>
<dbReference type="SMR" id="Q6FT03"/>
<dbReference type="FunCoup" id="Q6FT03">
    <property type="interactions" value="541"/>
</dbReference>
<dbReference type="STRING" id="284593.Q6FT03"/>
<dbReference type="EnsemblFungi" id="CAGL0G06424g-T">
    <property type="protein sequence ID" value="CAGL0G06424g-T-p1"/>
    <property type="gene ID" value="CAGL0G06424g"/>
</dbReference>
<dbReference type="KEGG" id="cgr:2888176"/>
<dbReference type="CGD" id="CAL0130827">
    <property type="gene designation" value="CAGL0G06424g"/>
</dbReference>
<dbReference type="VEuPathDB" id="FungiDB:B1J91_G06424g"/>
<dbReference type="VEuPathDB" id="FungiDB:CAGL0G06424g"/>
<dbReference type="eggNOG" id="KOG2527">
    <property type="taxonomic scope" value="Eukaryota"/>
</dbReference>
<dbReference type="HOGENOM" id="CLU_057172_2_1_1"/>
<dbReference type="InParanoid" id="Q6FT03"/>
<dbReference type="Proteomes" id="UP000002428">
    <property type="component" value="Chromosome G"/>
</dbReference>
<dbReference type="GO" id="GO:0005829">
    <property type="term" value="C:cytosol"/>
    <property type="evidence" value="ECO:0007669"/>
    <property type="project" value="EnsemblFungi"/>
</dbReference>
<dbReference type="GO" id="GO:0031901">
    <property type="term" value="C:early endosome membrane"/>
    <property type="evidence" value="ECO:0007669"/>
    <property type="project" value="TreeGrafter"/>
</dbReference>
<dbReference type="GO" id="GO:0000139">
    <property type="term" value="C:Golgi membrane"/>
    <property type="evidence" value="ECO:0007669"/>
    <property type="project" value="UniProtKB-SubCell"/>
</dbReference>
<dbReference type="GO" id="GO:0032994">
    <property type="term" value="C:protein-lipid complex"/>
    <property type="evidence" value="ECO:0007669"/>
    <property type="project" value="EnsemblFungi"/>
</dbReference>
<dbReference type="GO" id="GO:0030904">
    <property type="term" value="C:retromer complex"/>
    <property type="evidence" value="ECO:0007669"/>
    <property type="project" value="TreeGrafter"/>
</dbReference>
<dbReference type="GO" id="GO:0032266">
    <property type="term" value="F:phosphatidylinositol-3-phosphate binding"/>
    <property type="evidence" value="ECO:0007669"/>
    <property type="project" value="EnsemblFungi"/>
</dbReference>
<dbReference type="GO" id="GO:0032456">
    <property type="term" value="P:endocytic recycling"/>
    <property type="evidence" value="ECO:0007669"/>
    <property type="project" value="TreeGrafter"/>
</dbReference>
<dbReference type="GO" id="GO:0034499">
    <property type="term" value="P:late endosome to Golgi transport"/>
    <property type="evidence" value="ECO:0007669"/>
    <property type="project" value="EnsemblFungi"/>
</dbReference>
<dbReference type="GO" id="GO:0015031">
    <property type="term" value="P:protein transport"/>
    <property type="evidence" value="ECO:0007669"/>
    <property type="project" value="UniProtKB-KW"/>
</dbReference>
<dbReference type="FunFam" id="3.30.1520.10:FF:000030">
    <property type="entry name" value="Sorting nexin-3, variant"/>
    <property type="match status" value="1"/>
</dbReference>
<dbReference type="Gene3D" id="3.30.1520.10">
    <property type="entry name" value="Phox-like domain"/>
    <property type="match status" value="1"/>
</dbReference>
<dbReference type="InterPro" id="IPR001683">
    <property type="entry name" value="PX_dom"/>
</dbReference>
<dbReference type="InterPro" id="IPR036871">
    <property type="entry name" value="PX_dom_sf"/>
</dbReference>
<dbReference type="InterPro" id="IPR051074">
    <property type="entry name" value="Sorting_Nexin"/>
</dbReference>
<dbReference type="PANTHER" id="PTHR45963">
    <property type="entry name" value="RE52028P"/>
    <property type="match status" value="1"/>
</dbReference>
<dbReference type="PANTHER" id="PTHR45963:SF2">
    <property type="entry name" value="RE52028P"/>
    <property type="match status" value="1"/>
</dbReference>
<dbReference type="Pfam" id="PF00787">
    <property type="entry name" value="PX"/>
    <property type="match status" value="1"/>
</dbReference>
<dbReference type="SMART" id="SM00312">
    <property type="entry name" value="PX"/>
    <property type="match status" value="1"/>
</dbReference>
<dbReference type="SUPFAM" id="SSF64268">
    <property type="entry name" value="PX domain"/>
    <property type="match status" value="1"/>
</dbReference>
<dbReference type="PROSITE" id="PS50195">
    <property type="entry name" value="PX"/>
    <property type="match status" value="1"/>
</dbReference>
<protein>
    <recommendedName>
        <fullName>Sorting nexin-3</fullName>
    </recommendedName>
</protein>
<name>SNX3_CANGA</name>
<keyword id="KW-0963">Cytoplasm</keyword>
<keyword id="KW-0333">Golgi apparatus</keyword>
<keyword id="KW-0446">Lipid-binding</keyword>
<keyword id="KW-0472">Membrane</keyword>
<keyword id="KW-0653">Protein transport</keyword>
<keyword id="KW-1185">Reference proteome</keyword>
<keyword id="KW-0813">Transport</keyword>
<comment type="function">
    <text evidence="1">Required for retention of late Golgi membrane proteins. Component of the retrieval machinery that functions by direct interaction with the cytosolic tails of certain TGN membrane proteins during the sorting/budding process at the prevacuolar compartment. Binds phosphatidylinositol 3-phosphate (PtdIns(P3)) (By similarity).</text>
</comment>
<comment type="subcellular location">
    <subcellularLocation>
        <location evidence="1">Cytoplasm</location>
    </subcellularLocation>
    <subcellularLocation>
        <location evidence="4">Golgi apparatus membrane</location>
        <topology evidence="4">Peripheral membrane protein</topology>
        <orientation evidence="4">Cytoplasmic side</orientation>
    </subcellularLocation>
    <subcellularLocation>
        <location evidence="4">Prevacuolar compartment membrane</location>
        <topology evidence="4">Peripheral membrane protein</topology>
        <orientation evidence="4">Cytoplasmic side</orientation>
    </subcellularLocation>
</comment>
<comment type="domain">
    <text evidence="1">The PX domain binds phosphatidylinositol 3-phosphate which is necessary for peripheral membrane localization.</text>
</comment>
<comment type="similarity">
    <text evidence="4">Belongs to the sorting nexin family.</text>
</comment>
<evidence type="ECO:0000250" key="1"/>
<evidence type="ECO:0000255" key="2">
    <source>
        <dbReference type="PROSITE-ProRule" id="PRU00147"/>
    </source>
</evidence>
<evidence type="ECO:0000256" key="3">
    <source>
        <dbReference type="SAM" id="MobiDB-lite"/>
    </source>
</evidence>
<evidence type="ECO:0000305" key="4"/>
<gene>
    <name type="primary">SNX3</name>
    <name type="ordered locus">CAGL0G06424g</name>
</gene>